<accession>Q5AD59</accession>
<accession>A0A1D8PGB1</accession>
<proteinExistence type="inferred from homology"/>
<feature type="chain" id="PRO_0000402019" description="Methylthioribose-1-phosphate isomerase">
    <location>
        <begin position="1"/>
        <end position="416"/>
    </location>
</feature>
<feature type="active site" description="Proton donor" evidence="1">
    <location>
        <position position="280"/>
    </location>
</feature>
<feature type="site" description="Transition state stabilizer" evidence="1">
    <location>
        <position position="177"/>
    </location>
</feature>
<reference key="1">
    <citation type="journal article" date="2004" name="Proc. Natl. Acad. Sci. U.S.A.">
        <title>The diploid genome sequence of Candida albicans.</title>
        <authorList>
            <person name="Jones T."/>
            <person name="Federspiel N.A."/>
            <person name="Chibana H."/>
            <person name="Dungan J."/>
            <person name="Kalman S."/>
            <person name="Magee B.B."/>
            <person name="Newport G."/>
            <person name="Thorstenson Y.R."/>
            <person name="Agabian N."/>
            <person name="Magee P.T."/>
            <person name="Davis R.W."/>
            <person name="Scherer S."/>
        </authorList>
    </citation>
    <scope>NUCLEOTIDE SEQUENCE [LARGE SCALE GENOMIC DNA]</scope>
    <source>
        <strain>SC5314 / ATCC MYA-2876</strain>
    </source>
</reference>
<reference key="2">
    <citation type="journal article" date="2007" name="Genome Biol.">
        <title>Assembly of the Candida albicans genome into sixteen supercontigs aligned on the eight chromosomes.</title>
        <authorList>
            <person name="van het Hoog M."/>
            <person name="Rast T.J."/>
            <person name="Martchenko M."/>
            <person name="Grindle S."/>
            <person name="Dignard D."/>
            <person name="Hogues H."/>
            <person name="Cuomo C."/>
            <person name="Berriman M."/>
            <person name="Scherer S."/>
            <person name="Magee B.B."/>
            <person name="Whiteway M."/>
            <person name="Chibana H."/>
            <person name="Nantel A."/>
            <person name="Magee P.T."/>
        </authorList>
    </citation>
    <scope>GENOME REANNOTATION</scope>
    <source>
        <strain>SC5314 / ATCC MYA-2876</strain>
    </source>
</reference>
<reference key="3">
    <citation type="journal article" date="2013" name="Genome Biol.">
        <title>Assembly of a phased diploid Candida albicans genome facilitates allele-specific measurements and provides a simple model for repeat and indel structure.</title>
        <authorList>
            <person name="Muzzey D."/>
            <person name="Schwartz K."/>
            <person name="Weissman J.S."/>
            <person name="Sherlock G."/>
        </authorList>
    </citation>
    <scope>NUCLEOTIDE SEQUENCE [LARGE SCALE GENOMIC DNA]</scope>
    <scope>GENOME REANNOTATION</scope>
    <source>
        <strain>SC5314 / ATCC MYA-2876</strain>
    </source>
</reference>
<dbReference type="EC" id="5.3.1.23" evidence="1"/>
<dbReference type="EMBL" id="CP017624">
    <property type="protein sequence ID" value="AOW27164.1"/>
    <property type="molecule type" value="Genomic_DNA"/>
</dbReference>
<dbReference type="RefSeq" id="XP_719457.2">
    <property type="nucleotide sequence ID" value="XM_714364.2"/>
</dbReference>
<dbReference type="SMR" id="Q5AD59"/>
<dbReference type="FunCoup" id="Q5AD59">
    <property type="interactions" value="758"/>
</dbReference>
<dbReference type="STRING" id="237561.Q5AD59"/>
<dbReference type="EnsemblFungi" id="C2_01160W_A-T">
    <property type="protein sequence ID" value="C2_01160W_A-T-p1"/>
    <property type="gene ID" value="C2_01160W_A"/>
</dbReference>
<dbReference type="GeneID" id="3638861"/>
<dbReference type="KEGG" id="cal:CAALFM_C201160WA"/>
<dbReference type="CGD" id="CAL0000191452">
    <property type="gene designation" value="orf19.9559"/>
</dbReference>
<dbReference type="VEuPathDB" id="FungiDB:C2_01160W_A"/>
<dbReference type="eggNOG" id="KOG1468">
    <property type="taxonomic scope" value="Eukaryota"/>
</dbReference>
<dbReference type="HOGENOM" id="CLU_016218_1_3_1"/>
<dbReference type="InParanoid" id="Q5AD59"/>
<dbReference type="OrthoDB" id="2461at2759"/>
<dbReference type="UniPathway" id="UPA00904">
    <property type="reaction ID" value="UER00874"/>
</dbReference>
<dbReference type="PRO" id="PR:Q5AD59"/>
<dbReference type="Proteomes" id="UP000000559">
    <property type="component" value="Chromosome 2"/>
</dbReference>
<dbReference type="GO" id="GO:0005737">
    <property type="term" value="C:cytoplasm"/>
    <property type="evidence" value="ECO:0007669"/>
    <property type="project" value="UniProtKB-SubCell"/>
</dbReference>
<dbReference type="GO" id="GO:0005634">
    <property type="term" value="C:nucleus"/>
    <property type="evidence" value="ECO:0007669"/>
    <property type="project" value="UniProtKB-SubCell"/>
</dbReference>
<dbReference type="GO" id="GO:0046523">
    <property type="term" value="F:S-methyl-5-thioribose-1-phosphate isomerase activity"/>
    <property type="evidence" value="ECO:0000318"/>
    <property type="project" value="GO_Central"/>
</dbReference>
<dbReference type="GO" id="GO:0019509">
    <property type="term" value="P:L-methionine salvage from methylthioadenosine"/>
    <property type="evidence" value="ECO:0000318"/>
    <property type="project" value="GO_Central"/>
</dbReference>
<dbReference type="FunFam" id="1.20.120.420:FF:000006">
    <property type="entry name" value="Methylthioribose-1-phosphate isomerase"/>
    <property type="match status" value="1"/>
</dbReference>
<dbReference type="FunFam" id="3.40.50.10470:FF:000042">
    <property type="entry name" value="Methylthioribose-1-phosphate isomerase"/>
    <property type="match status" value="1"/>
</dbReference>
<dbReference type="Gene3D" id="1.20.120.420">
    <property type="entry name" value="translation initiation factor eif-2b, domain 1"/>
    <property type="match status" value="1"/>
</dbReference>
<dbReference type="Gene3D" id="3.40.50.10470">
    <property type="entry name" value="Translation initiation factor eif-2b, domain 2"/>
    <property type="match status" value="1"/>
</dbReference>
<dbReference type="HAMAP" id="MF_01678">
    <property type="entry name" value="Salvage_MtnA"/>
    <property type="match status" value="1"/>
</dbReference>
<dbReference type="InterPro" id="IPR000649">
    <property type="entry name" value="IF-2B-related"/>
</dbReference>
<dbReference type="InterPro" id="IPR005251">
    <property type="entry name" value="IF-M1Pi"/>
</dbReference>
<dbReference type="InterPro" id="IPR042529">
    <property type="entry name" value="IF_2B-like_C"/>
</dbReference>
<dbReference type="InterPro" id="IPR011559">
    <property type="entry name" value="Initiation_fac_2B_a/b/d"/>
</dbReference>
<dbReference type="InterPro" id="IPR027363">
    <property type="entry name" value="M1Pi_N"/>
</dbReference>
<dbReference type="InterPro" id="IPR037171">
    <property type="entry name" value="NagB/RpiA_transferase-like"/>
</dbReference>
<dbReference type="NCBIfam" id="TIGR00524">
    <property type="entry name" value="eIF-2B_rel"/>
    <property type="match status" value="1"/>
</dbReference>
<dbReference type="NCBIfam" id="NF004326">
    <property type="entry name" value="PRK05720.1"/>
    <property type="match status" value="1"/>
</dbReference>
<dbReference type="NCBIfam" id="TIGR00512">
    <property type="entry name" value="salvage_mtnA"/>
    <property type="match status" value="1"/>
</dbReference>
<dbReference type="PANTHER" id="PTHR43475">
    <property type="entry name" value="METHYLTHIORIBOSE-1-PHOSPHATE ISOMERASE"/>
    <property type="match status" value="1"/>
</dbReference>
<dbReference type="PANTHER" id="PTHR43475:SF1">
    <property type="entry name" value="METHYLTHIORIBOSE-1-PHOSPHATE ISOMERASE"/>
    <property type="match status" value="1"/>
</dbReference>
<dbReference type="Pfam" id="PF01008">
    <property type="entry name" value="IF-2B"/>
    <property type="match status" value="1"/>
</dbReference>
<dbReference type="SUPFAM" id="SSF100950">
    <property type="entry name" value="NagB/RpiA/CoA transferase-like"/>
    <property type="match status" value="1"/>
</dbReference>
<name>MTNA_CANAL</name>
<organism>
    <name type="scientific">Candida albicans (strain SC5314 / ATCC MYA-2876)</name>
    <name type="common">Yeast</name>
    <dbReference type="NCBI Taxonomy" id="237561"/>
    <lineage>
        <taxon>Eukaryota</taxon>
        <taxon>Fungi</taxon>
        <taxon>Dikarya</taxon>
        <taxon>Ascomycota</taxon>
        <taxon>Saccharomycotina</taxon>
        <taxon>Pichiomycetes</taxon>
        <taxon>Debaryomycetaceae</taxon>
        <taxon>Candida/Lodderomyces clade</taxon>
        <taxon>Candida</taxon>
    </lineage>
</organism>
<protein>
    <recommendedName>
        <fullName evidence="1">Methylthioribose-1-phosphate isomerase</fullName>
        <shortName evidence="1">M1Pi</shortName>
        <shortName evidence="1">MTR-1-P isomerase</shortName>
        <ecNumber evidence="1">5.3.1.23</ecNumber>
    </recommendedName>
    <alternativeName>
        <fullName evidence="1">S-methyl-5-thioribose-1-phosphate isomerase</fullName>
    </alternativeName>
    <alternativeName>
        <fullName evidence="1">Translation initiation factor eIF-2B subunit alpha/beta/delta-like protein</fullName>
    </alternativeName>
</protein>
<comment type="function">
    <text evidence="1">Catalyzes the interconversion of methylthioribose-1-phosphate (MTR-1-P) into methylthioribulose-1-phosphate (MTRu-1-P).</text>
</comment>
<comment type="catalytic activity">
    <reaction evidence="1">
        <text>5-(methylsulfanyl)-alpha-D-ribose 1-phosphate = 5-(methylsulfanyl)-D-ribulose 1-phosphate</text>
        <dbReference type="Rhea" id="RHEA:19989"/>
        <dbReference type="ChEBI" id="CHEBI:58533"/>
        <dbReference type="ChEBI" id="CHEBI:58548"/>
        <dbReference type="EC" id="5.3.1.23"/>
    </reaction>
</comment>
<comment type="pathway">
    <text evidence="1">Amino-acid biosynthesis; L-methionine biosynthesis via salvage pathway; L-methionine from S-methyl-5-thio-alpha-D-ribose 1-phosphate: step 1/6.</text>
</comment>
<comment type="subcellular location">
    <subcellularLocation>
        <location evidence="1">Cytoplasm</location>
    </subcellularLocation>
    <subcellularLocation>
        <location evidence="1">Nucleus</location>
    </subcellularLocation>
</comment>
<comment type="similarity">
    <text evidence="1">Belongs to the eIF-2B alpha/beta/delta subunits family. MtnA subfamily.</text>
</comment>
<evidence type="ECO:0000255" key="1">
    <source>
        <dbReference type="HAMAP-Rule" id="MF_03119"/>
    </source>
</evidence>
<keyword id="KW-0028">Amino-acid biosynthesis</keyword>
<keyword id="KW-0963">Cytoplasm</keyword>
<keyword id="KW-0413">Isomerase</keyword>
<keyword id="KW-0486">Methionine biosynthesis</keyword>
<keyword id="KW-0539">Nucleus</keyword>
<keyword id="KW-1185">Reference proteome</keyword>
<gene>
    <name evidence="1" type="primary">MRI1</name>
    <name type="ordered locus">CAALFM_C201160WA</name>
    <name type="ORF">CaO19.2008</name>
    <name type="ORF">CaO19.9559</name>
</gene>
<sequence>MSTTTRTLQAIKFDRDNIKLEILDQLLLPYSTSYIPINNIEDAFKAIKLMQVRGAPAIAIVGAFSVVVEVSNYLKQSDSNQKTIKNLNDSLNYLITSRPTAVNLANALNDIKQLLQKYNETDIIGEKIYQQIYDYAITLYDEDLANNKKIGENGLKYIIDTLTEQNFKGPFSIMTICNTGSLATSGHGTALGIIRSTYQALQKNNSKQDFWLDHIYPCETRPYNQGAKLTTYELDYEQIPFTLICDNMVSSLINTLSDDNKKPIKIDQSAPVKFIIVGADRIVENGDTANKIGTFQLSTIANFFNTNRFNTTATATNKQIKFIVAAPKTTIDLNTKTGDDIVIEERPANELTTLVGPLLNESGKVGEKLTVGIATPGISVWNPAFDVTPHELIDSIVTEDPHVFTKDKNGEFNLIK</sequence>